<gene>
    <name type="primary">prgT</name>
</gene>
<comment type="function">
    <text>Might be involved in the expression of prgA, but is not required for activation of the expression of prgB.</text>
</comment>
<comment type="induction">
    <text evidence="1">By pheromone.</text>
</comment>
<comment type="sequence caution" evidence="2">
    <conflict type="erroneous termination">
        <sequence resource="EMBL" id="AY855841"/>
    </conflict>
    <text>Truncated C-terminus.</text>
</comment>
<reference key="1">
    <citation type="journal article" date="1991" name="J. Bacteriol.">
        <title>Molecular and genetic analysis of a region of plasmid pCF10 containing positive control genes and structural genes encoding surface proteins involved in pheromone-inducible conjugation in Enterococcus faecalis.</title>
        <authorList>
            <person name="Kao S.-M."/>
            <person name="Olmsted S.B."/>
            <person name="Viksnins A.S."/>
            <person name="Gallo J.C."/>
            <person name="Dunny G.M."/>
        </authorList>
    </citation>
    <scope>NUCLEOTIDE SEQUENCE [GENOMIC DNA]</scope>
    <scope>INDUCTION</scope>
    <source>
        <strain>ATCC 47077 / OG1RF</strain>
        <plasmid>pCF10</plasmid>
    </source>
</reference>
<reference key="2">
    <citation type="journal article" date="1995" name="J. Bacteriol.">
        <title>Genetic analysis of a region of the Enterococcus faecalis plasmid pCF10 involved in positive regulation of conjugative transfer functions.</title>
        <authorList>
            <person name="Chung J.W."/>
            <person name="Bensing B.A."/>
            <person name="Dunny G.M."/>
        </authorList>
    </citation>
    <scope>PUTATIVE FUNCTION</scope>
    <source>
        <strain>ATCC 47077 / OG1RF</strain>
        <plasmid>pCF10</plasmid>
    </source>
</reference>
<feature type="chain" id="PRO_0000412117" description="Putative regulatory protein PrgT">
    <location>
        <begin position="1"/>
        <end position="101"/>
    </location>
</feature>
<protein>
    <recommendedName>
        <fullName>Putative regulatory protein PrgT</fullName>
    </recommendedName>
</protein>
<accession>P0DH73</accession>
<accession>Q01894</accession>
<name>Y4053_ENTFO</name>
<geneLocation type="plasmid">
    <name>pCF10</name>
</geneLocation>
<dbReference type="EMBL" id="AY855841">
    <property type="status" value="NOT_ANNOTATED_CDS"/>
    <property type="molecule type" value="Genomic_DNA"/>
</dbReference>
<dbReference type="PIR" id="S22451">
    <property type="entry name" value="D56272"/>
</dbReference>
<dbReference type="SMR" id="P0DH73"/>
<evidence type="ECO:0000269" key="1">
    <source>
    </source>
</evidence>
<evidence type="ECO:0000305" key="2"/>
<proteinExistence type="evidence at transcript level"/>
<organism>
    <name type="scientific">Enterococcus faecalis (strain ATCC 47077 / OG1RF)</name>
    <dbReference type="NCBI Taxonomy" id="474186"/>
    <lineage>
        <taxon>Bacteria</taxon>
        <taxon>Bacillati</taxon>
        <taxon>Bacillota</taxon>
        <taxon>Bacilli</taxon>
        <taxon>Lactobacillales</taxon>
        <taxon>Enterococcaceae</taxon>
        <taxon>Enterococcus</taxon>
    </lineage>
</organism>
<sequence length="101" mass="12362">MTKKEQSIWRKEMLALMNEDADWYRNEDTERFKRIQELAKKIETASTRQFSSHISKERFEAYQRMGLQFKEIAEEFHITTTALQQWHKDNGYPIYNKNNRK</sequence>
<keyword id="KW-0614">Plasmid</keyword>
<keyword id="KW-0804">Transcription</keyword>
<keyword id="KW-0805">Transcription regulation</keyword>